<protein>
    <recommendedName>
        <fullName evidence="1">Peptidyl-tRNA hydrolase</fullName>
        <shortName evidence="1">Pth</shortName>
        <ecNumber evidence="1">3.1.1.29</ecNumber>
    </recommendedName>
</protein>
<comment type="function">
    <text evidence="1">Hydrolyzes ribosome-free peptidyl-tRNAs (with 1 or more amino acids incorporated), which drop off the ribosome during protein synthesis, or as a result of ribosome stalling.</text>
</comment>
<comment type="function">
    <text evidence="1">Catalyzes the release of premature peptidyl moieties from peptidyl-tRNA molecules trapped in stalled 50S ribosomal subunits, and thus maintains levels of free tRNAs and 50S ribosomes.</text>
</comment>
<comment type="catalytic activity">
    <reaction evidence="1">
        <text>an N-acyl-L-alpha-aminoacyl-tRNA + H2O = an N-acyl-L-amino acid + a tRNA + H(+)</text>
        <dbReference type="Rhea" id="RHEA:54448"/>
        <dbReference type="Rhea" id="RHEA-COMP:10123"/>
        <dbReference type="Rhea" id="RHEA-COMP:13883"/>
        <dbReference type="ChEBI" id="CHEBI:15377"/>
        <dbReference type="ChEBI" id="CHEBI:15378"/>
        <dbReference type="ChEBI" id="CHEBI:59874"/>
        <dbReference type="ChEBI" id="CHEBI:78442"/>
        <dbReference type="ChEBI" id="CHEBI:138191"/>
        <dbReference type="EC" id="3.1.1.29"/>
    </reaction>
</comment>
<comment type="subunit">
    <text evidence="1">Monomer.</text>
</comment>
<comment type="subcellular location">
    <subcellularLocation>
        <location evidence="1">Cytoplasm</location>
    </subcellularLocation>
</comment>
<comment type="similarity">
    <text evidence="1">Belongs to the PTH family.</text>
</comment>
<name>PTH_MARMS</name>
<gene>
    <name evidence="1" type="primary">pth</name>
    <name type="ordered locus">Mmwyl1_3606</name>
</gene>
<keyword id="KW-0963">Cytoplasm</keyword>
<keyword id="KW-0378">Hydrolase</keyword>
<keyword id="KW-0694">RNA-binding</keyword>
<keyword id="KW-0820">tRNA-binding</keyword>
<accession>A6W1C9</accession>
<evidence type="ECO:0000255" key="1">
    <source>
        <dbReference type="HAMAP-Rule" id="MF_00083"/>
    </source>
</evidence>
<feature type="chain" id="PRO_1000075346" description="Peptidyl-tRNA hydrolase">
    <location>
        <begin position="1"/>
        <end position="194"/>
    </location>
</feature>
<feature type="active site" description="Proton acceptor" evidence="1">
    <location>
        <position position="22"/>
    </location>
</feature>
<feature type="binding site" evidence="1">
    <location>
        <position position="17"/>
    </location>
    <ligand>
        <name>tRNA</name>
        <dbReference type="ChEBI" id="CHEBI:17843"/>
    </ligand>
</feature>
<feature type="binding site" evidence="1">
    <location>
        <position position="68"/>
    </location>
    <ligand>
        <name>tRNA</name>
        <dbReference type="ChEBI" id="CHEBI:17843"/>
    </ligand>
</feature>
<feature type="binding site" evidence="1">
    <location>
        <position position="70"/>
    </location>
    <ligand>
        <name>tRNA</name>
        <dbReference type="ChEBI" id="CHEBI:17843"/>
    </ligand>
</feature>
<feature type="binding site" evidence="1">
    <location>
        <position position="116"/>
    </location>
    <ligand>
        <name>tRNA</name>
        <dbReference type="ChEBI" id="CHEBI:17843"/>
    </ligand>
</feature>
<feature type="site" description="Discriminates between blocked and unblocked aminoacyl-tRNA" evidence="1">
    <location>
        <position position="12"/>
    </location>
</feature>
<feature type="site" description="Stabilizes the basic form of H active site to accept a proton" evidence="1">
    <location>
        <position position="95"/>
    </location>
</feature>
<organism>
    <name type="scientific">Marinomonas sp. (strain MWYL1)</name>
    <dbReference type="NCBI Taxonomy" id="400668"/>
    <lineage>
        <taxon>Bacteria</taxon>
        <taxon>Pseudomonadati</taxon>
        <taxon>Pseudomonadota</taxon>
        <taxon>Gammaproteobacteria</taxon>
        <taxon>Oceanospirillales</taxon>
        <taxon>Oceanospirillaceae</taxon>
        <taxon>Marinomonas</taxon>
    </lineage>
</organism>
<sequence length="194" mass="21352">MAGFRLLVGLGNPGSEYENTRHNAGAQWIEALARQSQCSLRSEKKFFGQFGKVYIAGEECYLLIPTTYMNLSGKAVQAVCQFYKIPPEEVLVIHDELDIPPGTAKLKQGGGHGGHNGLKDIISKLANNREFGRLRIGIGHPGHASQVANYVLKKAAPDDYTKIEQAIDESLRYVDDIVRGNLNAVMNQLHSFKA</sequence>
<dbReference type="EC" id="3.1.1.29" evidence="1"/>
<dbReference type="EMBL" id="CP000749">
    <property type="protein sequence ID" value="ABR72508.1"/>
    <property type="molecule type" value="Genomic_DNA"/>
</dbReference>
<dbReference type="SMR" id="A6W1C9"/>
<dbReference type="STRING" id="400668.Mmwyl1_3606"/>
<dbReference type="KEGG" id="mmw:Mmwyl1_3606"/>
<dbReference type="eggNOG" id="COG0193">
    <property type="taxonomic scope" value="Bacteria"/>
</dbReference>
<dbReference type="HOGENOM" id="CLU_062456_3_1_6"/>
<dbReference type="OrthoDB" id="9800507at2"/>
<dbReference type="GO" id="GO:0005737">
    <property type="term" value="C:cytoplasm"/>
    <property type="evidence" value="ECO:0007669"/>
    <property type="project" value="UniProtKB-SubCell"/>
</dbReference>
<dbReference type="GO" id="GO:0004045">
    <property type="term" value="F:peptidyl-tRNA hydrolase activity"/>
    <property type="evidence" value="ECO:0007669"/>
    <property type="project" value="UniProtKB-UniRule"/>
</dbReference>
<dbReference type="GO" id="GO:0000049">
    <property type="term" value="F:tRNA binding"/>
    <property type="evidence" value="ECO:0007669"/>
    <property type="project" value="UniProtKB-UniRule"/>
</dbReference>
<dbReference type="GO" id="GO:0006515">
    <property type="term" value="P:protein quality control for misfolded or incompletely synthesized proteins"/>
    <property type="evidence" value="ECO:0007669"/>
    <property type="project" value="UniProtKB-UniRule"/>
</dbReference>
<dbReference type="GO" id="GO:0072344">
    <property type="term" value="P:rescue of stalled ribosome"/>
    <property type="evidence" value="ECO:0007669"/>
    <property type="project" value="UniProtKB-UniRule"/>
</dbReference>
<dbReference type="CDD" id="cd00462">
    <property type="entry name" value="PTH"/>
    <property type="match status" value="1"/>
</dbReference>
<dbReference type="FunFam" id="3.40.50.1470:FF:000001">
    <property type="entry name" value="Peptidyl-tRNA hydrolase"/>
    <property type="match status" value="1"/>
</dbReference>
<dbReference type="Gene3D" id="3.40.50.1470">
    <property type="entry name" value="Peptidyl-tRNA hydrolase"/>
    <property type="match status" value="1"/>
</dbReference>
<dbReference type="HAMAP" id="MF_00083">
    <property type="entry name" value="Pept_tRNA_hydro_bact"/>
    <property type="match status" value="1"/>
</dbReference>
<dbReference type="InterPro" id="IPR001328">
    <property type="entry name" value="Pept_tRNA_hydro"/>
</dbReference>
<dbReference type="InterPro" id="IPR018171">
    <property type="entry name" value="Pept_tRNA_hydro_CS"/>
</dbReference>
<dbReference type="InterPro" id="IPR036416">
    <property type="entry name" value="Pept_tRNA_hydro_sf"/>
</dbReference>
<dbReference type="NCBIfam" id="TIGR00447">
    <property type="entry name" value="pth"/>
    <property type="match status" value="1"/>
</dbReference>
<dbReference type="PANTHER" id="PTHR17224">
    <property type="entry name" value="PEPTIDYL-TRNA HYDROLASE"/>
    <property type="match status" value="1"/>
</dbReference>
<dbReference type="PANTHER" id="PTHR17224:SF1">
    <property type="entry name" value="PEPTIDYL-TRNA HYDROLASE"/>
    <property type="match status" value="1"/>
</dbReference>
<dbReference type="Pfam" id="PF01195">
    <property type="entry name" value="Pept_tRNA_hydro"/>
    <property type="match status" value="1"/>
</dbReference>
<dbReference type="SUPFAM" id="SSF53178">
    <property type="entry name" value="Peptidyl-tRNA hydrolase-like"/>
    <property type="match status" value="1"/>
</dbReference>
<dbReference type="PROSITE" id="PS01196">
    <property type="entry name" value="PEPT_TRNA_HYDROL_2"/>
    <property type="match status" value="1"/>
</dbReference>
<reference key="1">
    <citation type="submission" date="2007-06" db="EMBL/GenBank/DDBJ databases">
        <title>Complete sequence of Marinomonas sp. MWYL1.</title>
        <authorList>
            <consortium name="US DOE Joint Genome Institute"/>
            <person name="Copeland A."/>
            <person name="Lucas S."/>
            <person name="Lapidus A."/>
            <person name="Barry K."/>
            <person name="Glavina del Rio T."/>
            <person name="Dalin E."/>
            <person name="Tice H."/>
            <person name="Pitluck S."/>
            <person name="Kiss H."/>
            <person name="Brettin T."/>
            <person name="Bruce D."/>
            <person name="Detter J.C."/>
            <person name="Han C."/>
            <person name="Schmutz J."/>
            <person name="Larimer F."/>
            <person name="Land M."/>
            <person name="Hauser L."/>
            <person name="Kyrpides N."/>
            <person name="Kim E."/>
            <person name="Johnston A.W.B."/>
            <person name="Todd J.D."/>
            <person name="Rogers R."/>
            <person name="Wexler M."/>
            <person name="Bond P.L."/>
            <person name="Li Y."/>
            <person name="Richardson P."/>
        </authorList>
    </citation>
    <scope>NUCLEOTIDE SEQUENCE [LARGE SCALE GENOMIC DNA]</scope>
    <source>
        <strain>MWYL1</strain>
    </source>
</reference>
<proteinExistence type="inferred from homology"/>